<protein>
    <recommendedName>
        <fullName evidence="1">Ribosomal RNA large subunit methyltransferase K/L</fullName>
    </recommendedName>
    <domain>
        <recommendedName>
            <fullName evidence="1">23S rRNA m2G2445 methyltransferase</fullName>
            <ecNumber evidence="1">2.1.1.173</ecNumber>
        </recommendedName>
        <alternativeName>
            <fullName evidence="1">rRNA (guanine-N(2)-)-methyltransferase RlmL</fullName>
        </alternativeName>
    </domain>
    <domain>
        <recommendedName>
            <fullName evidence="1">23S rRNA m7G2069 methyltransferase</fullName>
            <ecNumber evidence="1">2.1.1.264</ecNumber>
        </recommendedName>
        <alternativeName>
            <fullName evidence="1">rRNA (guanine-N(7)-)-methyltransferase RlmK</fullName>
        </alternativeName>
    </domain>
</protein>
<organism>
    <name type="scientific">Escherichia coli O157:H7 (strain EC4115 / EHEC)</name>
    <dbReference type="NCBI Taxonomy" id="444450"/>
    <lineage>
        <taxon>Bacteria</taxon>
        <taxon>Pseudomonadati</taxon>
        <taxon>Pseudomonadota</taxon>
        <taxon>Gammaproteobacteria</taxon>
        <taxon>Enterobacterales</taxon>
        <taxon>Enterobacteriaceae</taxon>
        <taxon>Escherichia</taxon>
    </lineage>
</organism>
<feature type="chain" id="PRO_0000366745" description="Ribosomal RNA large subunit methyltransferase K/L">
    <location>
        <begin position="1"/>
        <end position="702"/>
    </location>
</feature>
<feature type="domain" description="THUMP" evidence="1">
    <location>
        <begin position="43"/>
        <end position="154"/>
    </location>
</feature>
<name>RLMKL_ECO5E</name>
<sequence length="702" mass="78896">MNSLFASTARGLEELLKTELENLGAVECQVVQGGVHFKGDTRLVYQSLMWSRLASRIMLPLGECKVYSDLDLYLGVQAINWTEMFNPGATFAVHFSGLNDTIRNSQYGAMKVKDAIVDAFTRKNLPRPNVDRDAPDIRVNVWLHKETASIALDLSGDGLHLRGYRDRAGIAPIKETLAAAIVMRSGWQPGTPLLDPMCGSGTLLIEAAMLATDRAPGLHRGRWGFSGWAQHDEAIWQEVKAEAQTRARKGLAEYSSHFYGSDSDARVIQRARTNARLAGIGELITFEVKDVAQLTNPLPKEPYGTVLSNPPYGERLDSEPALIALHSLLGRIMKNQFGGWNLSLFSASPDLLSCLQLRADKQYKAKNGPLDCVQKNYHVAESTPDSKPAMVAEDYANRLRKNLKKFEKWARQEGIECYRLYDADLPEYNVAVDRYADWVVVQEYAPPKTIDAHKARQRLFDIIAATISVLGIAPNKLVLKTRERQKGKNQYQKLGEKGEFLEVTEYNAHLWVNLTDYLDTGLFLDHRIARRMLGQMSKGKDFLNLFSYTGSATVHAGLGGARSTTTVDMSRTYLEWAERNLRLNGLTGRAHRLIQADCLAWLREANEQFDLIFIDPPTFSNSKRMEDAFDVQRDHLALMKDLKRLLRAGGTIMFSNNKRGFRMDLDGLAKLGLKAQEITQKTLSQDFARNRQIHNCWLITAA</sequence>
<keyword id="KW-0963">Cytoplasm</keyword>
<keyword id="KW-0489">Methyltransferase</keyword>
<keyword id="KW-0694">RNA-binding</keyword>
<keyword id="KW-0698">rRNA processing</keyword>
<keyword id="KW-0949">S-adenosyl-L-methionine</keyword>
<keyword id="KW-0808">Transferase</keyword>
<accession>B5YT79</accession>
<dbReference type="EC" id="2.1.1.173" evidence="1"/>
<dbReference type="EC" id="2.1.1.264" evidence="1"/>
<dbReference type="EMBL" id="CP001164">
    <property type="protein sequence ID" value="ACI37826.1"/>
    <property type="molecule type" value="Genomic_DNA"/>
</dbReference>
<dbReference type="SMR" id="B5YT79"/>
<dbReference type="KEGG" id="ecf:ECH74115_1112"/>
<dbReference type="HOGENOM" id="CLU_014042_2_0_6"/>
<dbReference type="GO" id="GO:0005737">
    <property type="term" value="C:cytoplasm"/>
    <property type="evidence" value="ECO:0007669"/>
    <property type="project" value="UniProtKB-SubCell"/>
</dbReference>
<dbReference type="GO" id="GO:0052915">
    <property type="term" value="F:23S rRNA (guanine(2445)-N(2))-methyltransferase activity"/>
    <property type="evidence" value="ECO:0007669"/>
    <property type="project" value="UniProtKB-UniRule"/>
</dbReference>
<dbReference type="GO" id="GO:0003723">
    <property type="term" value="F:RNA binding"/>
    <property type="evidence" value="ECO:0007669"/>
    <property type="project" value="UniProtKB-KW"/>
</dbReference>
<dbReference type="GO" id="GO:0070043">
    <property type="term" value="F:rRNA (guanine-N7-)-methyltransferase activity"/>
    <property type="evidence" value="ECO:0007669"/>
    <property type="project" value="UniProtKB-UniRule"/>
</dbReference>
<dbReference type="CDD" id="cd02440">
    <property type="entry name" value="AdoMet_MTases"/>
    <property type="match status" value="1"/>
</dbReference>
<dbReference type="CDD" id="cd11715">
    <property type="entry name" value="THUMP_AdoMetMT"/>
    <property type="match status" value="1"/>
</dbReference>
<dbReference type="FunFam" id="3.30.750.80:FF:000001">
    <property type="entry name" value="Ribosomal RNA large subunit methyltransferase K/L"/>
    <property type="match status" value="1"/>
</dbReference>
<dbReference type="FunFam" id="3.40.50.150:FF:000039">
    <property type="entry name" value="Ribosomal RNA large subunit methyltransferase K/L"/>
    <property type="match status" value="1"/>
</dbReference>
<dbReference type="Gene3D" id="3.30.2130.30">
    <property type="match status" value="1"/>
</dbReference>
<dbReference type="Gene3D" id="3.30.750.80">
    <property type="entry name" value="RNA methyltransferase domain (HRMD) like"/>
    <property type="match status" value="1"/>
</dbReference>
<dbReference type="Gene3D" id="3.40.50.150">
    <property type="entry name" value="Vaccinia Virus protein VP39"/>
    <property type="match status" value="2"/>
</dbReference>
<dbReference type="HAMAP" id="MF_01858">
    <property type="entry name" value="23SrRNA_methyltr_KL"/>
    <property type="match status" value="1"/>
</dbReference>
<dbReference type="InterPro" id="IPR017244">
    <property type="entry name" value="23SrRNA_methyltr_KL"/>
</dbReference>
<dbReference type="InterPro" id="IPR002052">
    <property type="entry name" value="DNA_methylase_N6_adenine_CS"/>
</dbReference>
<dbReference type="InterPro" id="IPR000241">
    <property type="entry name" value="RlmKL-like_Mtase"/>
</dbReference>
<dbReference type="InterPro" id="IPR053943">
    <property type="entry name" value="RlmKL-like_Mtase_CS"/>
</dbReference>
<dbReference type="InterPro" id="IPR054170">
    <property type="entry name" value="RlmL_1st"/>
</dbReference>
<dbReference type="InterPro" id="IPR019614">
    <property type="entry name" value="SAM-dep_methyl-trfase"/>
</dbReference>
<dbReference type="InterPro" id="IPR029063">
    <property type="entry name" value="SAM-dependent_MTases_sf"/>
</dbReference>
<dbReference type="InterPro" id="IPR004114">
    <property type="entry name" value="THUMP_dom"/>
</dbReference>
<dbReference type="NCBIfam" id="NF008748">
    <property type="entry name" value="PRK11783.1"/>
    <property type="match status" value="1"/>
</dbReference>
<dbReference type="PANTHER" id="PTHR47313">
    <property type="entry name" value="RIBOSOMAL RNA LARGE SUBUNIT METHYLTRANSFERASE K/L"/>
    <property type="match status" value="1"/>
</dbReference>
<dbReference type="PANTHER" id="PTHR47313:SF1">
    <property type="entry name" value="RIBOSOMAL RNA LARGE SUBUNIT METHYLTRANSFERASE K_L"/>
    <property type="match status" value="1"/>
</dbReference>
<dbReference type="Pfam" id="PF10672">
    <property type="entry name" value="Methyltrans_SAM"/>
    <property type="match status" value="1"/>
</dbReference>
<dbReference type="Pfam" id="PF22020">
    <property type="entry name" value="RlmL_1st"/>
    <property type="match status" value="1"/>
</dbReference>
<dbReference type="Pfam" id="PF02926">
    <property type="entry name" value="THUMP"/>
    <property type="match status" value="1"/>
</dbReference>
<dbReference type="Pfam" id="PF01170">
    <property type="entry name" value="UPF0020"/>
    <property type="match status" value="1"/>
</dbReference>
<dbReference type="PIRSF" id="PIRSF037618">
    <property type="entry name" value="RNA_Mtase_bacteria_prd"/>
    <property type="match status" value="1"/>
</dbReference>
<dbReference type="PRINTS" id="PR00507">
    <property type="entry name" value="N12N6MTFRASE"/>
</dbReference>
<dbReference type="SMART" id="SM00981">
    <property type="entry name" value="THUMP"/>
    <property type="match status" value="1"/>
</dbReference>
<dbReference type="SUPFAM" id="SSF53335">
    <property type="entry name" value="S-adenosyl-L-methionine-dependent methyltransferases"/>
    <property type="match status" value="2"/>
</dbReference>
<dbReference type="PROSITE" id="PS51165">
    <property type="entry name" value="THUMP"/>
    <property type="match status" value="1"/>
</dbReference>
<dbReference type="PROSITE" id="PS01261">
    <property type="entry name" value="UPF0020"/>
    <property type="match status" value="1"/>
</dbReference>
<proteinExistence type="inferred from homology"/>
<gene>
    <name evidence="1" type="primary">rlmL</name>
    <name type="ordered locus">ECH74115_1112</name>
</gene>
<comment type="function">
    <text evidence="1">Specifically methylates the guanine in position 2445 (m2G2445) and the guanine in position 2069 (m7G2069) of 23S rRNA.</text>
</comment>
<comment type="catalytic activity">
    <reaction evidence="1">
        <text>guanosine(2445) in 23S rRNA + S-adenosyl-L-methionine = N(2)-methylguanosine(2445) in 23S rRNA + S-adenosyl-L-homocysteine + H(+)</text>
        <dbReference type="Rhea" id="RHEA:42740"/>
        <dbReference type="Rhea" id="RHEA-COMP:10215"/>
        <dbReference type="Rhea" id="RHEA-COMP:10216"/>
        <dbReference type="ChEBI" id="CHEBI:15378"/>
        <dbReference type="ChEBI" id="CHEBI:57856"/>
        <dbReference type="ChEBI" id="CHEBI:59789"/>
        <dbReference type="ChEBI" id="CHEBI:74269"/>
        <dbReference type="ChEBI" id="CHEBI:74481"/>
        <dbReference type="EC" id="2.1.1.173"/>
    </reaction>
</comment>
<comment type="catalytic activity">
    <reaction evidence="1">
        <text>guanosine(2069) in 23S rRNA + S-adenosyl-L-methionine = N(2)-methylguanosine(2069) in 23S rRNA + S-adenosyl-L-homocysteine + H(+)</text>
        <dbReference type="Rhea" id="RHEA:43772"/>
        <dbReference type="Rhea" id="RHEA-COMP:10688"/>
        <dbReference type="Rhea" id="RHEA-COMP:10689"/>
        <dbReference type="ChEBI" id="CHEBI:15378"/>
        <dbReference type="ChEBI" id="CHEBI:57856"/>
        <dbReference type="ChEBI" id="CHEBI:59789"/>
        <dbReference type="ChEBI" id="CHEBI:74269"/>
        <dbReference type="ChEBI" id="CHEBI:74481"/>
        <dbReference type="EC" id="2.1.1.264"/>
    </reaction>
</comment>
<comment type="subcellular location">
    <subcellularLocation>
        <location evidence="1">Cytoplasm</location>
    </subcellularLocation>
</comment>
<comment type="similarity">
    <text evidence="1">Belongs to the methyltransferase superfamily. RlmKL family.</text>
</comment>
<reference key="1">
    <citation type="journal article" date="2011" name="Proc. Natl. Acad. Sci. U.S.A.">
        <title>Genomic anatomy of Escherichia coli O157:H7 outbreaks.</title>
        <authorList>
            <person name="Eppinger M."/>
            <person name="Mammel M.K."/>
            <person name="Leclerc J.E."/>
            <person name="Ravel J."/>
            <person name="Cebula T.A."/>
        </authorList>
    </citation>
    <scope>NUCLEOTIDE SEQUENCE [LARGE SCALE GENOMIC DNA]</scope>
    <source>
        <strain>EC4115 / EHEC</strain>
    </source>
</reference>
<evidence type="ECO:0000255" key="1">
    <source>
        <dbReference type="HAMAP-Rule" id="MF_01858"/>
    </source>
</evidence>